<reference key="1">
    <citation type="submission" date="2006-10" db="EMBL/GenBank/DDBJ databases">
        <authorList>
            <person name="Fleischmann R.D."/>
            <person name="Dodson R.J."/>
            <person name="Haft D.H."/>
            <person name="Merkel J.S."/>
            <person name="Nelson W.C."/>
            <person name="Fraser C.M."/>
        </authorList>
    </citation>
    <scope>NUCLEOTIDE SEQUENCE [LARGE SCALE GENOMIC DNA]</scope>
    <source>
        <strain>104</strain>
    </source>
</reference>
<keyword id="KW-0687">Ribonucleoprotein</keyword>
<keyword id="KW-0689">Ribosomal protein</keyword>
<dbReference type="EMBL" id="CP000479">
    <property type="protein sequence ID" value="ABK67730.1"/>
    <property type="molecule type" value="Genomic_DNA"/>
</dbReference>
<dbReference type="RefSeq" id="WP_011723938.1">
    <property type="nucleotide sequence ID" value="NC_008595.1"/>
</dbReference>
<dbReference type="SMR" id="A0QBQ8"/>
<dbReference type="KEGG" id="mav:MAV_1093"/>
<dbReference type="HOGENOM" id="CLU_203263_0_0_11"/>
<dbReference type="Proteomes" id="UP000001574">
    <property type="component" value="Chromosome"/>
</dbReference>
<dbReference type="GO" id="GO:0015934">
    <property type="term" value="C:large ribosomal subunit"/>
    <property type="evidence" value="ECO:0007669"/>
    <property type="project" value="InterPro"/>
</dbReference>
<dbReference type="GO" id="GO:0003735">
    <property type="term" value="F:structural constituent of ribosome"/>
    <property type="evidence" value="ECO:0007669"/>
    <property type="project" value="InterPro"/>
</dbReference>
<dbReference type="GO" id="GO:0006412">
    <property type="term" value="P:translation"/>
    <property type="evidence" value="ECO:0007669"/>
    <property type="project" value="UniProtKB-UniRule"/>
</dbReference>
<dbReference type="HAMAP" id="MF_00340">
    <property type="entry name" value="Ribosomal_bL32"/>
    <property type="match status" value="1"/>
</dbReference>
<dbReference type="InterPro" id="IPR002677">
    <property type="entry name" value="Ribosomal_bL32"/>
</dbReference>
<dbReference type="InterPro" id="IPR011332">
    <property type="entry name" value="Ribosomal_zn-bd"/>
</dbReference>
<dbReference type="NCBIfam" id="TIGR01031">
    <property type="entry name" value="rpmF_bact"/>
    <property type="match status" value="1"/>
</dbReference>
<dbReference type="Pfam" id="PF01783">
    <property type="entry name" value="Ribosomal_L32p"/>
    <property type="match status" value="1"/>
</dbReference>
<dbReference type="SUPFAM" id="SSF57829">
    <property type="entry name" value="Zn-binding ribosomal proteins"/>
    <property type="match status" value="1"/>
</dbReference>
<feature type="chain" id="PRO_0000296503" description="Large ribosomal subunit protein bL32">
    <location>
        <begin position="1"/>
        <end position="57"/>
    </location>
</feature>
<feature type="region of interest" description="Disordered" evidence="2">
    <location>
        <begin position="1"/>
        <end position="20"/>
    </location>
</feature>
<feature type="compositionally biased region" description="Basic residues" evidence="2">
    <location>
        <begin position="1"/>
        <end position="19"/>
    </location>
</feature>
<evidence type="ECO:0000255" key="1">
    <source>
        <dbReference type="HAMAP-Rule" id="MF_00340"/>
    </source>
</evidence>
<evidence type="ECO:0000256" key="2">
    <source>
        <dbReference type="SAM" id="MobiDB-lite"/>
    </source>
</evidence>
<evidence type="ECO:0000305" key="3"/>
<comment type="similarity">
    <text evidence="1">Belongs to the bacterial ribosomal protein bL32 family.</text>
</comment>
<gene>
    <name evidence="1" type="primary">rpmF</name>
    <name type="ordered locus">MAV_1093</name>
</gene>
<proteinExistence type="inferred from homology"/>
<accession>A0QBQ8</accession>
<protein>
    <recommendedName>
        <fullName evidence="1">Large ribosomal subunit protein bL32</fullName>
    </recommendedName>
    <alternativeName>
        <fullName evidence="3">50S ribosomal protein L32</fullName>
    </alternativeName>
</protein>
<organism>
    <name type="scientific">Mycobacterium avium (strain 104)</name>
    <dbReference type="NCBI Taxonomy" id="243243"/>
    <lineage>
        <taxon>Bacteria</taxon>
        <taxon>Bacillati</taxon>
        <taxon>Actinomycetota</taxon>
        <taxon>Actinomycetes</taxon>
        <taxon>Mycobacteriales</taxon>
        <taxon>Mycobacteriaceae</taxon>
        <taxon>Mycobacterium</taxon>
        <taxon>Mycobacterium avium complex (MAC)</taxon>
    </lineage>
</organism>
<name>RL32_MYCA1</name>
<sequence>MAVPKRRMSRANTRSRRAQWKAEKTELVGVTVAGQRHKVPRRLLKAARLDLIDLDRR</sequence>